<keyword id="KW-0002">3D-structure</keyword>
<keyword id="KW-0025">Alternative splicing</keyword>
<keyword id="KW-0039">Anion exchange</keyword>
<keyword id="KW-0050">Antiport</keyword>
<keyword id="KW-1003">Cell membrane</keyword>
<keyword id="KW-0175">Coiled coil</keyword>
<keyword id="KW-0968">Cytoplasmic vesicle</keyword>
<keyword id="KW-1015">Disulfide bond</keyword>
<keyword id="KW-0325">Glycoprotein</keyword>
<keyword id="KW-0406">Ion transport</keyword>
<keyword id="KW-0472">Membrane</keyword>
<keyword id="KW-1267">Proteomics identification</keyword>
<keyword id="KW-1185">Reference proteome</keyword>
<keyword id="KW-0915">Sodium</keyword>
<keyword id="KW-0739">Sodium transport</keyword>
<keyword id="KW-0770">Synapse</keyword>
<keyword id="KW-0812">Transmembrane</keyword>
<keyword id="KW-1133">Transmembrane helix</keyword>
<keyword id="KW-0813">Transport</keyword>
<keyword id="KW-0862">Zinc</keyword>
<reference evidence="19 21" key="1">
    <citation type="journal article" date="2001" name="J. Biol. Chem.">
        <title>Cloning, characterization, and chromosomal mapping of a human electroneutral Na(+)-driven Cl-HCO3 exchanger.</title>
        <authorList>
            <person name="Grichtchenko I.I."/>
            <person name="Choi I."/>
            <person name="Zhong X."/>
            <person name="Bray-Ward P."/>
            <person name="Russell J.M."/>
            <person name="Boron W.F."/>
        </authorList>
    </citation>
    <scope>NUCLEOTIDE SEQUENCE [MRNA] (ISOFORM 3)</scope>
    <scope>TISSUE SPECIFICITY</scope>
    <scope>ACTIVITY REGULATION (ISOFORM 3)</scope>
    <scope>TRANSPORTER ACTIVITY (ISOFORM 3)</scope>
    <source>
        <tissue evidence="21">Frontal cortex</tissue>
    </source>
</reference>
<reference evidence="19 24" key="2">
    <citation type="journal article" date="2008" name="Physiol. Genomics">
        <title>Cloning and characterization of novel human SLC4A8 gene products encoding Na+-driven Cl-/HCO3(-) exchanger variants NDCBE-A, -C, and -D.</title>
        <authorList>
            <person name="Parker M.D."/>
            <person name="Bouyer P."/>
            <person name="Daly C.M."/>
            <person name="Boron W.F."/>
        </authorList>
    </citation>
    <scope>NUCLEOTIDE SEQUENCE [MRNA] (ISOFORMS 1; 4 AND 5)</scope>
    <scope>ALTERNATIVE SPLICING (ISOFORM 3)</scope>
    <scope>FUNCTION</scope>
    <scope>TRANSPORTER ACTIVITY (ISOFORMS 1; 3; 4 AND 5)</scope>
    <scope>ACTIVITY REGULATION (ISOFORMS 1; 3; 4 AND 5)</scope>
    <scope>SUBCELLULAR LOCATION (ISOFORMS 1; 3; 4 AND 5)</scope>
    <scope>TISSUE SPECIFICITY (ISOFORMS 1; 4 AND 5)</scope>
    <source>
        <tissue evidence="24">Brain</tissue>
        <tissue evidence="25">Heart</tissue>
    </source>
</reference>
<reference evidence="19 26" key="3">
    <citation type="journal article" date="1998" name="DNA Res.">
        <title>Prediction of the coding sequences of unidentified human genes. XI. The complete sequences of 100 new cDNA clones from brain which code for large proteins in vitro.</title>
        <authorList>
            <person name="Nagase T."/>
            <person name="Ishikawa K."/>
            <person name="Suyama M."/>
            <person name="Kikuno R."/>
            <person name="Miyajima N."/>
            <person name="Tanaka A."/>
            <person name="Kotani H."/>
            <person name="Nomura N."/>
            <person name="Ohara O."/>
        </authorList>
    </citation>
    <scope>NUCLEOTIDE SEQUENCE [LARGE SCALE MRNA] (ISOFORM 2)</scope>
    <source>
        <tissue evidence="26">Brain</tissue>
    </source>
</reference>
<reference key="4">
    <citation type="journal article" date="2004" name="Nat. Genet.">
        <title>Complete sequencing and characterization of 21,243 full-length human cDNAs.</title>
        <authorList>
            <person name="Ota T."/>
            <person name="Suzuki Y."/>
            <person name="Nishikawa T."/>
            <person name="Otsuki T."/>
            <person name="Sugiyama T."/>
            <person name="Irie R."/>
            <person name="Wakamatsu A."/>
            <person name="Hayashi K."/>
            <person name="Sato H."/>
            <person name="Nagai K."/>
            <person name="Kimura K."/>
            <person name="Makita H."/>
            <person name="Sekine M."/>
            <person name="Obayashi M."/>
            <person name="Nishi T."/>
            <person name="Shibahara T."/>
            <person name="Tanaka T."/>
            <person name="Ishii S."/>
            <person name="Yamamoto J."/>
            <person name="Saito K."/>
            <person name="Kawai Y."/>
            <person name="Isono Y."/>
            <person name="Nakamura Y."/>
            <person name="Nagahari K."/>
            <person name="Murakami K."/>
            <person name="Yasuda T."/>
            <person name="Iwayanagi T."/>
            <person name="Wagatsuma M."/>
            <person name="Shiratori A."/>
            <person name="Sudo H."/>
            <person name="Hosoiri T."/>
            <person name="Kaku Y."/>
            <person name="Kodaira H."/>
            <person name="Kondo H."/>
            <person name="Sugawara M."/>
            <person name="Takahashi M."/>
            <person name="Kanda K."/>
            <person name="Yokoi T."/>
            <person name="Furuya T."/>
            <person name="Kikkawa E."/>
            <person name="Omura Y."/>
            <person name="Abe K."/>
            <person name="Kamihara K."/>
            <person name="Katsuta N."/>
            <person name="Sato K."/>
            <person name="Tanikawa M."/>
            <person name="Yamazaki M."/>
            <person name="Ninomiya K."/>
            <person name="Ishibashi T."/>
            <person name="Yamashita H."/>
            <person name="Murakawa K."/>
            <person name="Fujimori K."/>
            <person name="Tanai H."/>
            <person name="Kimata M."/>
            <person name="Watanabe M."/>
            <person name="Hiraoka S."/>
            <person name="Chiba Y."/>
            <person name="Ishida S."/>
            <person name="Ono Y."/>
            <person name="Takiguchi S."/>
            <person name="Watanabe S."/>
            <person name="Yosida M."/>
            <person name="Hotuta T."/>
            <person name="Kusano J."/>
            <person name="Kanehori K."/>
            <person name="Takahashi-Fujii A."/>
            <person name="Hara H."/>
            <person name="Tanase T.-O."/>
            <person name="Nomura Y."/>
            <person name="Togiya S."/>
            <person name="Komai F."/>
            <person name="Hara R."/>
            <person name="Takeuchi K."/>
            <person name="Arita M."/>
            <person name="Imose N."/>
            <person name="Musashino K."/>
            <person name="Yuuki H."/>
            <person name="Oshima A."/>
            <person name="Sasaki N."/>
            <person name="Aotsuka S."/>
            <person name="Yoshikawa Y."/>
            <person name="Matsunawa H."/>
            <person name="Ichihara T."/>
            <person name="Shiohata N."/>
            <person name="Sano S."/>
            <person name="Moriya S."/>
            <person name="Momiyama H."/>
            <person name="Satoh N."/>
            <person name="Takami S."/>
            <person name="Terashima Y."/>
            <person name="Suzuki O."/>
            <person name="Nakagawa S."/>
            <person name="Senoh A."/>
            <person name="Mizoguchi H."/>
            <person name="Goto Y."/>
            <person name="Shimizu F."/>
            <person name="Wakebe H."/>
            <person name="Hishigaki H."/>
            <person name="Watanabe T."/>
            <person name="Sugiyama A."/>
            <person name="Takemoto M."/>
            <person name="Kawakami B."/>
            <person name="Yamazaki M."/>
            <person name="Watanabe K."/>
            <person name="Kumagai A."/>
            <person name="Itakura S."/>
            <person name="Fukuzumi Y."/>
            <person name="Fujimori Y."/>
            <person name="Komiyama M."/>
            <person name="Tashiro H."/>
            <person name="Tanigami A."/>
            <person name="Fujiwara T."/>
            <person name="Ono T."/>
            <person name="Yamada K."/>
            <person name="Fujii Y."/>
            <person name="Ozaki K."/>
            <person name="Hirao M."/>
            <person name="Ohmori Y."/>
            <person name="Kawabata A."/>
            <person name="Hikiji T."/>
            <person name="Kobatake N."/>
            <person name="Inagaki H."/>
            <person name="Ikema Y."/>
            <person name="Okamoto S."/>
            <person name="Okitani R."/>
            <person name="Kawakami T."/>
            <person name="Noguchi S."/>
            <person name="Itoh T."/>
            <person name="Shigeta K."/>
            <person name="Senba T."/>
            <person name="Matsumura K."/>
            <person name="Nakajima Y."/>
            <person name="Mizuno T."/>
            <person name="Morinaga M."/>
            <person name="Sasaki M."/>
            <person name="Togashi T."/>
            <person name="Oyama M."/>
            <person name="Hata H."/>
            <person name="Watanabe M."/>
            <person name="Komatsu T."/>
            <person name="Mizushima-Sugano J."/>
            <person name="Satoh T."/>
            <person name="Shirai Y."/>
            <person name="Takahashi Y."/>
            <person name="Nakagawa K."/>
            <person name="Okumura K."/>
            <person name="Nagase T."/>
            <person name="Nomura N."/>
            <person name="Kikuchi H."/>
            <person name="Masuho Y."/>
            <person name="Yamashita R."/>
            <person name="Nakai K."/>
            <person name="Yada T."/>
            <person name="Nakamura Y."/>
            <person name="Ohara O."/>
            <person name="Isogai T."/>
            <person name="Sugano S."/>
        </authorList>
    </citation>
    <scope>NUCLEOTIDE SEQUENCE [LARGE SCALE MRNA] (ISOFORM 8)</scope>
    <source>
        <tissue>Caudate nucleus</tissue>
    </source>
</reference>
<reference key="5">
    <citation type="journal article" date="2007" name="BMC Genomics">
        <title>The full-ORF clone resource of the German cDNA consortium.</title>
        <authorList>
            <person name="Bechtel S."/>
            <person name="Rosenfelder H."/>
            <person name="Duda A."/>
            <person name="Schmidt C.P."/>
            <person name="Ernst U."/>
            <person name="Wellenreuther R."/>
            <person name="Mehrle A."/>
            <person name="Schuster C."/>
            <person name="Bahr A."/>
            <person name="Bloecker H."/>
            <person name="Heubner D."/>
            <person name="Hoerlein A."/>
            <person name="Michel G."/>
            <person name="Wedler H."/>
            <person name="Koehrer K."/>
            <person name="Ottenwaelder B."/>
            <person name="Poustka A."/>
            <person name="Wiemann S."/>
            <person name="Schupp I."/>
        </authorList>
    </citation>
    <scope>NUCLEOTIDE SEQUENCE [LARGE SCALE MRNA] (ISOFORM 7)</scope>
    <source>
        <tissue>Amygdala</tissue>
    </source>
</reference>
<reference key="6">
    <citation type="journal article" date="2006" name="Nature">
        <title>The finished DNA sequence of human chromosome 12.</title>
        <authorList>
            <person name="Scherer S.E."/>
            <person name="Muzny D.M."/>
            <person name="Buhay C.J."/>
            <person name="Chen R."/>
            <person name="Cree A."/>
            <person name="Ding Y."/>
            <person name="Dugan-Rocha S."/>
            <person name="Gill R."/>
            <person name="Gunaratne P."/>
            <person name="Harris R.A."/>
            <person name="Hawes A.C."/>
            <person name="Hernandez J."/>
            <person name="Hodgson A.V."/>
            <person name="Hume J."/>
            <person name="Jackson A."/>
            <person name="Khan Z.M."/>
            <person name="Kovar-Smith C."/>
            <person name="Lewis L.R."/>
            <person name="Lozado R.J."/>
            <person name="Metzker M.L."/>
            <person name="Milosavljevic A."/>
            <person name="Miner G.R."/>
            <person name="Montgomery K.T."/>
            <person name="Morgan M.B."/>
            <person name="Nazareth L.V."/>
            <person name="Scott G."/>
            <person name="Sodergren E."/>
            <person name="Song X.-Z."/>
            <person name="Steffen D."/>
            <person name="Lovering R.C."/>
            <person name="Wheeler D.A."/>
            <person name="Worley K.C."/>
            <person name="Yuan Y."/>
            <person name="Zhang Z."/>
            <person name="Adams C.Q."/>
            <person name="Ansari-Lari M.A."/>
            <person name="Ayele M."/>
            <person name="Brown M.J."/>
            <person name="Chen G."/>
            <person name="Chen Z."/>
            <person name="Clerc-Blankenburg K.P."/>
            <person name="Davis C."/>
            <person name="Delgado O."/>
            <person name="Dinh H.H."/>
            <person name="Draper H."/>
            <person name="Gonzalez-Garay M.L."/>
            <person name="Havlak P."/>
            <person name="Jackson L.R."/>
            <person name="Jacob L.S."/>
            <person name="Kelly S.H."/>
            <person name="Li L."/>
            <person name="Li Z."/>
            <person name="Liu J."/>
            <person name="Liu W."/>
            <person name="Lu J."/>
            <person name="Maheshwari M."/>
            <person name="Nguyen B.-V."/>
            <person name="Okwuonu G.O."/>
            <person name="Pasternak S."/>
            <person name="Perez L.M."/>
            <person name="Plopper F.J.H."/>
            <person name="Santibanez J."/>
            <person name="Shen H."/>
            <person name="Tabor P.E."/>
            <person name="Verduzco D."/>
            <person name="Waldron L."/>
            <person name="Wang Q."/>
            <person name="Williams G.A."/>
            <person name="Zhang J."/>
            <person name="Zhou J."/>
            <person name="Allen C.C."/>
            <person name="Amin A.G."/>
            <person name="Anyalebechi V."/>
            <person name="Bailey M."/>
            <person name="Barbaria J.A."/>
            <person name="Bimage K.E."/>
            <person name="Bryant N.P."/>
            <person name="Burch P.E."/>
            <person name="Burkett C.E."/>
            <person name="Burrell K.L."/>
            <person name="Calderon E."/>
            <person name="Cardenas V."/>
            <person name="Carter K."/>
            <person name="Casias K."/>
            <person name="Cavazos I."/>
            <person name="Cavazos S.R."/>
            <person name="Ceasar H."/>
            <person name="Chacko J."/>
            <person name="Chan S.N."/>
            <person name="Chavez D."/>
            <person name="Christopoulos C."/>
            <person name="Chu J."/>
            <person name="Cockrell R."/>
            <person name="Cox C.D."/>
            <person name="Dang M."/>
            <person name="Dathorne S.R."/>
            <person name="David R."/>
            <person name="Davis C.M."/>
            <person name="Davy-Carroll L."/>
            <person name="Deshazo D.R."/>
            <person name="Donlin J.E."/>
            <person name="D'Souza L."/>
            <person name="Eaves K.A."/>
            <person name="Egan A."/>
            <person name="Emery-Cohen A.J."/>
            <person name="Escotto M."/>
            <person name="Flagg N."/>
            <person name="Forbes L.D."/>
            <person name="Gabisi A.M."/>
            <person name="Garza M."/>
            <person name="Hamilton C."/>
            <person name="Henderson N."/>
            <person name="Hernandez O."/>
            <person name="Hines S."/>
            <person name="Hogues M.E."/>
            <person name="Huang M."/>
            <person name="Idlebird D.G."/>
            <person name="Johnson R."/>
            <person name="Jolivet A."/>
            <person name="Jones S."/>
            <person name="Kagan R."/>
            <person name="King L.M."/>
            <person name="Leal B."/>
            <person name="Lebow H."/>
            <person name="Lee S."/>
            <person name="LeVan J.M."/>
            <person name="Lewis L.C."/>
            <person name="London P."/>
            <person name="Lorensuhewa L.M."/>
            <person name="Loulseged H."/>
            <person name="Lovett D.A."/>
            <person name="Lucier A."/>
            <person name="Lucier R.L."/>
            <person name="Ma J."/>
            <person name="Madu R.C."/>
            <person name="Mapua P."/>
            <person name="Martindale A.D."/>
            <person name="Martinez E."/>
            <person name="Massey E."/>
            <person name="Mawhiney S."/>
            <person name="Meador M.G."/>
            <person name="Mendez S."/>
            <person name="Mercado C."/>
            <person name="Mercado I.C."/>
            <person name="Merritt C.E."/>
            <person name="Miner Z.L."/>
            <person name="Minja E."/>
            <person name="Mitchell T."/>
            <person name="Mohabbat F."/>
            <person name="Mohabbat K."/>
            <person name="Montgomery B."/>
            <person name="Moore N."/>
            <person name="Morris S."/>
            <person name="Munidasa M."/>
            <person name="Ngo R.N."/>
            <person name="Nguyen N.B."/>
            <person name="Nickerson E."/>
            <person name="Nwaokelemeh O.O."/>
            <person name="Nwokenkwo S."/>
            <person name="Obregon M."/>
            <person name="Oguh M."/>
            <person name="Oragunye N."/>
            <person name="Oviedo R.J."/>
            <person name="Parish B.J."/>
            <person name="Parker D.N."/>
            <person name="Parrish J."/>
            <person name="Parks K.L."/>
            <person name="Paul H.A."/>
            <person name="Payton B.A."/>
            <person name="Perez A."/>
            <person name="Perrin W."/>
            <person name="Pickens A."/>
            <person name="Primus E.L."/>
            <person name="Pu L.-L."/>
            <person name="Puazo M."/>
            <person name="Quiles M.M."/>
            <person name="Quiroz J.B."/>
            <person name="Rabata D."/>
            <person name="Reeves K."/>
            <person name="Ruiz S.J."/>
            <person name="Shao H."/>
            <person name="Sisson I."/>
            <person name="Sonaike T."/>
            <person name="Sorelle R.P."/>
            <person name="Sutton A.E."/>
            <person name="Svatek A.F."/>
            <person name="Svetz L.A."/>
            <person name="Tamerisa K.S."/>
            <person name="Taylor T.R."/>
            <person name="Teague B."/>
            <person name="Thomas N."/>
            <person name="Thorn R.D."/>
            <person name="Trejos Z.Y."/>
            <person name="Trevino B.K."/>
            <person name="Ukegbu O.N."/>
            <person name="Urban J.B."/>
            <person name="Vasquez L.I."/>
            <person name="Vera V.A."/>
            <person name="Villasana D.M."/>
            <person name="Wang L."/>
            <person name="Ward-Moore S."/>
            <person name="Warren J.T."/>
            <person name="Wei X."/>
            <person name="White F."/>
            <person name="Williamson A.L."/>
            <person name="Wleczyk R."/>
            <person name="Wooden H.S."/>
            <person name="Wooden S.H."/>
            <person name="Yen J."/>
            <person name="Yoon L."/>
            <person name="Yoon V."/>
            <person name="Zorrilla S.E."/>
            <person name="Nelson D."/>
            <person name="Kucherlapati R."/>
            <person name="Weinstock G."/>
            <person name="Gibbs R.A."/>
        </authorList>
    </citation>
    <scope>NUCLEOTIDE SEQUENCE [LARGE SCALE GENOMIC DNA]</scope>
</reference>
<reference evidence="19 24" key="7">
    <citation type="submission" date="2005-07" db="EMBL/GenBank/DDBJ databases">
        <authorList>
            <person name="Mural R.J."/>
            <person name="Istrail S."/>
            <person name="Sutton G.G."/>
            <person name="Florea L."/>
            <person name="Halpern A.L."/>
            <person name="Mobarry C.M."/>
            <person name="Lippert R."/>
            <person name="Walenz B."/>
            <person name="Shatkay H."/>
            <person name="Dew I."/>
            <person name="Miller J.R."/>
            <person name="Flanigan M.J."/>
            <person name="Edwards N.J."/>
            <person name="Bolanos R."/>
            <person name="Fasulo D."/>
            <person name="Halldorsson B.V."/>
            <person name="Hannenhalli S."/>
            <person name="Turner R."/>
            <person name="Yooseph S."/>
            <person name="Lu F."/>
            <person name="Nusskern D.R."/>
            <person name="Shue B.C."/>
            <person name="Zheng X.H."/>
            <person name="Zhong F."/>
            <person name="Delcher A.L."/>
            <person name="Huson D.H."/>
            <person name="Kravitz S.A."/>
            <person name="Mouchard L."/>
            <person name="Reinert K."/>
            <person name="Remington K.A."/>
            <person name="Clark A.G."/>
            <person name="Waterman M.S."/>
            <person name="Eichler E.E."/>
            <person name="Adams M.D."/>
            <person name="Hunkapiller M.W."/>
            <person name="Myers E.W."/>
            <person name="Venter J.C."/>
        </authorList>
    </citation>
    <scope>NUCLEOTIDE SEQUENCE [LARGE SCALE GENOMIC DNA]</scope>
</reference>
<reference evidence="19 23" key="8">
    <citation type="journal article" date="2004" name="Genome Res.">
        <title>The status, quality, and expansion of the NIH full-length cDNA project: the Mammalian Gene Collection (MGC).</title>
        <authorList>
            <consortium name="The MGC Project Team"/>
        </authorList>
    </citation>
    <scope>NUCLEOTIDE SEQUENCE [LARGE SCALE MRNA] (ISOFORM 6)</scope>
    <source>
        <tissue evidence="23">Testis</tissue>
    </source>
</reference>
<reference evidence="19 22" key="9">
    <citation type="journal article" date="1999" name="Am. J. Physiol.">
        <title>Characterization of Na+/HCO-3 cotransporter isoform NBC-3.</title>
        <authorList>
            <person name="Amlal H."/>
            <person name="Burnham C.E."/>
            <person name="Soleimani M."/>
        </authorList>
    </citation>
    <scope>NUCLEOTIDE SEQUENCE [MRNA] OF 1-670 (ISOFORMS 1/3/6)</scope>
    <scope>TISSUE SPECIFICITY</scope>
    <source>
        <tissue evidence="5">Testis carcinoma</tissue>
    </source>
</reference>
<reference key="10">
    <citation type="journal article" date="1999" name="Am. J. Physiol.">
        <authorList>
            <person name="Amlal H."/>
            <person name="Burnham C.E."/>
            <person name="Soleimani M."/>
        </authorList>
    </citation>
    <scope>ERRATUM OF PUBMED:10362779</scope>
</reference>
<reference evidence="19" key="11">
    <citation type="journal article" date="2007" name="Am. J. Physiol.">
        <title>Molecular expression of SLC4-derived Na+-dependent anion transporters in selected human tissues.</title>
        <authorList>
            <person name="Damkier H.H."/>
            <person name="Nielsen S."/>
            <person name="Praetorius J."/>
        </authorList>
    </citation>
    <scope>SUBCELLULAR LOCATION</scope>
    <scope>TISSUE SPECIFICITY</scope>
</reference>
<reference key="12">
    <citation type="journal article" date="2008" name="Proc. Natl. Acad. Sci. U.S.A.">
        <title>A quantitative atlas of mitotic phosphorylation.</title>
        <authorList>
            <person name="Dephoure N."/>
            <person name="Zhou C."/>
            <person name="Villen J."/>
            <person name="Beausoleil S.A."/>
            <person name="Bakalarski C.E."/>
            <person name="Elledge S.J."/>
            <person name="Gygi S.P."/>
        </authorList>
    </citation>
    <scope>IDENTIFICATION BY MASS SPECTROMETRY [LARGE SCALE ANALYSIS]</scope>
    <source>
        <tissue>Cervix carcinoma</tissue>
    </source>
</reference>
<reference key="13">
    <citation type="journal article" date="2017" name="Sci. Rep.">
        <title>The crystal structure of the regulatory domain of the human sodium-driven chloride/bicarbonate exchanger.</title>
        <authorList>
            <person name="Alvadia C.M."/>
            <person name="Sommer T."/>
            <person name="Bjerregaard-Andersen K."/>
            <person name="Damkier H.H."/>
            <person name="Montrasio M."/>
            <person name="Aalkjaer C."/>
            <person name="Morth J.P."/>
        </authorList>
    </citation>
    <scope>X-RAY CRYSTALLOGRAPHY (2.80 ANGSTROMS) OF 1-344 (ISOFORM 4)</scope>
    <scope>SUBUNIT (ISOFORM 4)</scope>
    <scope>MUTAGENESIS OF TRP-80; HIS-167 AND HIS-169 (ISOFORM 4)</scope>
    <scope>ZINC-BINDING (ISOFORM 4)</scope>
    <scope>ACTIVITY REGULATION (ISOFORM 4)</scope>
</reference>
<accession>Q2Y0W8</accession>
<accession>A0MMZ1</accession>
<accession>B4DHY0</accession>
<accession>E7EML0</accession>
<accession>F5GZ31</accession>
<accession>F5H7F5</accession>
<accession>O94843</accession>
<accession>O95233</accession>
<accession>Q004B4</accession>
<accession>Q8N3U2</accession>
<accession>Q8TC60</accession>
<accession>Q9UKX8</accession>
<evidence type="ECO:0000250" key="1">
    <source>
        <dbReference type="UniProtKB" id="Q6RVG2"/>
    </source>
</evidence>
<evidence type="ECO:0000250" key="2">
    <source>
        <dbReference type="UniProtKB" id="Q8JZR6"/>
    </source>
</evidence>
<evidence type="ECO:0000255" key="3"/>
<evidence type="ECO:0000256" key="4">
    <source>
        <dbReference type="SAM" id="MobiDB-lite"/>
    </source>
</evidence>
<evidence type="ECO:0000269" key="5">
    <source>
    </source>
</evidence>
<evidence type="ECO:0000269" key="6">
    <source>
    </source>
</evidence>
<evidence type="ECO:0000269" key="7">
    <source>
    </source>
</evidence>
<evidence type="ECO:0000269" key="8">
    <source>
    </source>
</evidence>
<evidence type="ECO:0000269" key="9">
    <source>
    </source>
</evidence>
<evidence type="ECO:0000269" key="10">
    <source>
    </source>
</evidence>
<evidence type="ECO:0000269" key="11">
    <source>
    </source>
</evidence>
<evidence type="ECO:0000303" key="12">
    <source>
    </source>
</evidence>
<evidence type="ECO:0000303" key="13">
    <source>
    </source>
</evidence>
<evidence type="ECO:0000303" key="14">
    <source>
    </source>
</evidence>
<evidence type="ECO:0000303" key="15">
    <source>
    </source>
</evidence>
<evidence type="ECO:0000303" key="16">
    <source>
    </source>
</evidence>
<evidence type="ECO:0000303" key="17">
    <source>
    </source>
</evidence>
<evidence type="ECO:0000303" key="18">
    <source>
    </source>
</evidence>
<evidence type="ECO:0000305" key="19"/>
<evidence type="ECO:0000305" key="20">
    <source>
    </source>
</evidence>
<evidence type="ECO:0000312" key="21">
    <source>
        <dbReference type="EMBL" id="AAC82380.1"/>
    </source>
</evidence>
<evidence type="ECO:0000312" key="22">
    <source>
        <dbReference type="EMBL" id="AAD52981.1"/>
    </source>
</evidence>
<evidence type="ECO:0000312" key="23">
    <source>
        <dbReference type="EMBL" id="AAH25994.1"/>
    </source>
</evidence>
<evidence type="ECO:0000312" key="24">
    <source>
        <dbReference type="EMBL" id="AAY79176.1"/>
    </source>
</evidence>
<evidence type="ECO:0000312" key="25">
    <source>
        <dbReference type="EMBL" id="ABJ91577.1"/>
    </source>
</evidence>
<evidence type="ECO:0000312" key="26">
    <source>
        <dbReference type="EMBL" id="BAA34459.1"/>
    </source>
</evidence>
<evidence type="ECO:0000312" key="27">
    <source>
        <dbReference type="HGNC" id="HGNC:11034"/>
    </source>
</evidence>
<evidence type="ECO:0007829" key="28">
    <source>
        <dbReference type="PDB" id="5JHO"/>
    </source>
</evidence>
<comment type="function">
    <text evidence="2 9">Mediates electroneutral sodium- and carbonate-dependent chloride-HCO3(-) exchange with a Na(+):HCO3(-) stoichiometry of 2:1 (PubMed:18577713). Plays a major role in pH regulation in neurons (By similarity). Mediates sodium reabsorption in the renal cortical collecting ducts (By similarity).</text>
</comment>
<comment type="catalytic activity">
    <molecule>Isoform 1</molecule>
    <reaction evidence="9">
        <text>2 hydrogencarbonate(out) + chloride(in) + Na(+)(out) = 2 hydrogencarbonate(in) + chloride(out) + Na(+)(in)</text>
        <dbReference type="Rhea" id="RHEA:72739"/>
        <dbReference type="ChEBI" id="CHEBI:17544"/>
        <dbReference type="ChEBI" id="CHEBI:17996"/>
        <dbReference type="ChEBI" id="CHEBI:29101"/>
    </reaction>
</comment>
<comment type="catalytic activity">
    <molecule>Isoform 3</molecule>
    <reaction evidence="6 9">
        <text>2 hydrogencarbonate(out) + chloride(in) + Na(+)(out) = 2 hydrogencarbonate(in) + chloride(out) + Na(+)(in)</text>
        <dbReference type="Rhea" id="RHEA:72739"/>
        <dbReference type="ChEBI" id="CHEBI:17544"/>
        <dbReference type="ChEBI" id="CHEBI:17996"/>
        <dbReference type="ChEBI" id="CHEBI:29101"/>
    </reaction>
</comment>
<comment type="catalytic activity">
    <molecule>Isoform 4</molecule>
    <reaction evidence="9">
        <text>2 hydrogencarbonate(out) + chloride(in) + Na(+)(out) = 2 hydrogencarbonate(in) + chloride(out) + Na(+)(in)</text>
        <dbReference type="Rhea" id="RHEA:72739"/>
        <dbReference type="ChEBI" id="CHEBI:17544"/>
        <dbReference type="ChEBI" id="CHEBI:17996"/>
        <dbReference type="ChEBI" id="CHEBI:29101"/>
    </reaction>
</comment>
<comment type="catalytic activity">
    <molecule>Isoform 5</molecule>
    <reaction evidence="9">
        <text>2 hydrogencarbonate(out) + chloride(in) + Na(+)(out) = 2 hydrogencarbonate(in) + chloride(out) + Na(+)(in)</text>
        <dbReference type="Rhea" id="RHEA:72739"/>
        <dbReference type="ChEBI" id="CHEBI:17544"/>
        <dbReference type="ChEBI" id="CHEBI:17996"/>
        <dbReference type="ChEBI" id="CHEBI:29101"/>
    </reaction>
</comment>
<comment type="activity regulation">
    <molecule>Isoform 1</molecule>
    <text evidence="9">Activity is inhibited by 4,4'-Di-isothiocyanatostilbene-2,2'-disulfonic acid (DIDS - an inhibitor of several anion channels and transporters).</text>
</comment>
<comment type="activity regulation">
    <molecule>Isoform 3</molecule>
    <text evidence="6 9">Activity is inhibited by 4,4'-Di-isothiocyanatostilbene-2,2'-disulfonic acid (DIDS - an inhibitor of several anion channels and transporters).</text>
</comment>
<comment type="activity regulation">
    <molecule>Isoform 4</molecule>
    <text evidence="9 20">Activity is inhibited by 4,4'-Di-isothiocyanatostilbene-2,2'-disulfonic acid (DIDS - an inhibitor of several anion channels and transporters) (PubMed:18577713). Zinc-binding negatively regulates its activity (Probable).</text>
</comment>
<comment type="activity regulation">
    <molecule>Isoform 5</molecule>
    <text evidence="9">Activity is inhibited by 4,4'-Di-isothiocyanatostilbene-2,2'-disulfonic acid (DIDS - an inhibitor of several anion channels and transporters).</text>
</comment>
<comment type="subunit">
    <text evidence="1">Homodimer.</text>
</comment>
<comment type="subunit">
    <molecule>Isoform 4</molecule>
    <text evidence="7">Homodimer.</text>
</comment>
<comment type="subcellular location">
    <subcellularLocation>
        <location evidence="8">Apical cell membrane</location>
        <topology evidence="3">Multi-pass membrane protein</topology>
    </subcellularLocation>
    <subcellularLocation>
        <location evidence="1">Basolateral cell membrane</location>
        <topology evidence="3">Multi-pass membrane protein</topology>
    </subcellularLocation>
    <subcellularLocation>
        <location evidence="1">Cytoplasmic vesicle</location>
        <location evidence="1">Secretory vesicle</location>
        <location evidence="1">Synaptic vesicle membrane</location>
        <topology evidence="3">Multi-pass membrane protein</topology>
    </subcellularLocation>
</comment>
<comment type="subcellular location">
    <molecule>Isoform 1</molecule>
    <subcellularLocation>
        <location evidence="9">Cell membrane</location>
        <topology evidence="3">Multi-pass membrane protein</topology>
    </subcellularLocation>
</comment>
<comment type="subcellular location">
    <molecule>Isoform 3</molecule>
    <subcellularLocation>
        <location evidence="9">Cell membrane</location>
        <topology evidence="3">Multi-pass membrane protein</topology>
    </subcellularLocation>
</comment>
<comment type="subcellular location">
    <molecule>Isoform 4</molecule>
    <subcellularLocation>
        <location evidence="9">Cell membrane</location>
        <topology evidence="3">Multi-pass membrane protein</topology>
    </subcellularLocation>
</comment>
<comment type="subcellular location">
    <molecule>Isoform 5</molecule>
    <subcellularLocation>
        <location evidence="9">Cell membrane</location>
        <topology evidence="3">Multi-pass membrane protein</topology>
    </subcellularLocation>
</comment>
<comment type="alternative products">
    <event type="alternative splicing"/>
    <isoform>
        <id>Q2Y0W8-1</id>
        <name evidence="9">1</name>
        <name evidence="17">NDCBE-A</name>
        <sequence type="displayed"/>
    </isoform>
    <isoform>
        <id>Q2Y0W8-2</id>
        <name evidence="11">2</name>
        <sequence type="described" ref="VSP_052760 VSP_052765"/>
    </isoform>
    <isoform>
        <id>Q2Y0W8-3</id>
        <name evidence="6">3</name>
        <name evidence="17">NDCBE-B</name>
        <sequence type="described" ref="VSP_052765"/>
    </isoform>
    <isoform>
        <id>Q2Y0W8-4</id>
        <name evidence="6">4</name>
        <name evidence="17">NDCBE-D</name>
        <sequence type="described" ref="VSP_052759 VSP_052765"/>
    </isoform>
    <isoform>
        <id>Q2Y0W8-5</id>
        <name evidence="9">5</name>
        <name evidence="17">NDCBE-C</name>
        <sequence type="described" ref="VSP_052759"/>
    </isoform>
    <isoform>
        <id>Q2Y0W8-6</id>
        <name evidence="7">6</name>
        <sequence type="described" ref="VSP_052761 VSP_052762"/>
    </isoform>
    <isoform>
        <id>Q2Y0W8-7</id>
        <name>7</name>
        <sequence type="described" ref="VSP_052759 VSP_052763 VSP_052764"/>
    </isoform>
    <isoform>
        <id>Q2Y0W8-8</id>
        <name>8</name>
        <sequence type="described" ref="VSP_052759 VSP_052761 VSP_052762"/>
    </isoform>
</comment>
<comment type="tissue specificity">
    <text evidence="5 6 8">Expressed in the pyramidal cells of the hippocampus (at protein level). Highly expressed in all major regions of the brain, spinal column and in testis, and moderate levels in trachea, thyroid and medulla region of kidney. Low expression levels observed in pancreas and kidney cortex.</text>
</comment>
<comment type="tissue specificity">
    <molecule>Isoform 1</molecule>
    <text evidence="9">Expressed in the brain.</text>
</comment>
<comment type="tissue specificity">
    <molecule>Isoform 4</molecule>
    <text evidence="9">Expressed in the brain, heart and kidney.</text>
</comment>
<comment type="tissue specificity">
    <molecule>Isoform 5</molecule>
    <text evidence="9">Expressed in the brain, heart and kidney.</text>
</comment>
<comment type="miscellaneous">
    <molecule>Isoform 3</molecule>
    <text evidence="19">May be due to an intron retention.</text>
</comment>
<comment type="miscellaneous">
    <molecule>Isoform 4</molecule>
    <text evidence="19">May be due to an intron retention.</text>
</comment>
<comment type="similarity">
    <text evidence="3">Belongs to the anion exchanger (TC 2.A.31) family.</text>
</comment>
<comment type="sequence caution" evidence="19">
    <conflict type="erroneous initiation">
        <sequence resource="EMBL-CDS" id="BAA34459"/>
    </conflict>
    <text>Extended N-terminus.</text>
</comment>
<comment type="sequence caution" evidence="19">
    <conflict type="erroneous initiation">
        <sequence resource="EMBL-CDS" id="CAD38576"/>
    </conflict>
    <text>Extended N-terminus.</text>
</comment>
<organism>
    <name type="scientific">Homo sapiens</name>
    <name type="common">Human</name>
    <dbReference type="NCBI Taxonomy" id="9606"/>
    <lineage>
        <taxon>Eukaryota</taxon>
        <taxon>Metazoa</taxon>
        <taxon>Chordata</taxon>
        <taxon>Craniata</taxon>
        <taxon>Vertebrata</taxon>
        <taxon>Euteleostomi</taxon>
        <taxon>Mammalia</taxon>
        <taxon>Eutheria</taxon>
        <taxon>Euarchontoglires</taxon>
        <taxon>Primates</taxon>
        <taxon>Haplorrhini</taxon>
        <taxon>Catarrhini</taxon>
        <taxon>Hominidae</taxon>
        <taxon>Homo</taxon>
    </lineage>
</organism>
<dbReference type="EMBL" id="AF069512">
    <property type="protein sequence ID" value="AAC82380.1"/>
    <property type="molecule type" value="mRNA"/>
</dbReference>
<dbReference type="EMBL" id="DQ063579">
    <property type="protein sequence ID" value="AAY79176.1"/>
    <property type="molecule type" value="mRNA"/>
</dbReference>
<dbReference type="EMBL" id="DQ975204">
    <property type="protein sequence ID" value="ABJ09587.1"/>
    <property type="molecule type" value="mRNA"/>
</dbReference>
<dbReference type="EMBL" id="DQ996537">
    <property type="protein sequence ID" value="ABJ91576.1"/>
    <property type="molecule type" value="mRNA"/>
</dbReference>
<dbReference type="EMBL" id="DQ996398">
    <property type="protein sequence ID" value="ABJ91577.1"/>
    <property type="molecule type" value="mRNA"/>
</dbReference>
<dbReference type="EMBL" id="AB018282">
    <property type="protein sequence ID" value="BAA34459.1"/>
    <property type="status" value="ALT_INIT"/>
    <property type="molecule type" value="mRNA"/>
</dbReference>
<dbReference type="EMBL" id="AK295315">
    <property type="protein sequence ID" value="BAG58292.1"/>
    <property type="molecule type" value="mRNA"/>
</dbReference>
<dbReference type="EMBL" id="AL831915">
    <property type="protein sequence ID" value="CAD38576.2"/>
    <property type="status" value="ALT_INIT"/>
    <property type="molecule type" value="mRNA"/>
</dbReference>
<dbReference type="EMBL" id="AC025097">
    <property type="status" value="NOT_ANNOTATED_CDS"/>
    <property type="molecule type" value="Genomic_DNA"/>
</dbReference>
<dbReference type="EMBL" id="AC046135">
    <property type="status" value="NOT_ANNOTATED_CDS"/>
    <property type="molecule type" value="Genomic_DNA"/>
</dbReference>
<dbReference type="EMBL" id="AC107031">
    <property type="status" value="NOT_ANNOTATED_CDS"/>
    <property type="molecule type" value="Genomic_DNA"/>
</dbReference>
<dbReference type="EMBL" id="CH471111">
    <property type="protein sequence ID" value="EAW58192.1"/>
    <property type="molecule type" value="Genomic_DNA"/>
</dbReference>
<dbReference type="EMBL" id="BC025994">
    <property type="protein sequence ID" value="AAH25994.1"/>
    <property type="molecule type" value="mRNA"/>
</dbReference>
<dbReference type="EMBL" id="AF107099">
    <property type="protein sequence ID" value="AAD52981.1"/>
    <property type="molecule type" value="mRNA"/>
</dbReference>
<dbReference type="CCDS" id="CCDS44890.1">
    <molecule id="Q2Y0W8-1"/>
</dbReference>
<dbReference type="CCDS" id="CCDS58232.1">
    <molecule id="Q2Y0W8-7"/>
</dbReference>
<dbReference type="CCDS" id="CCDS58233.1">
    <molecule id="Q2Y0W8-8"/>
</dbReference>
<dbReference type="CCDS" id="CCDS73470.1">
    <molecule id="Q2Y0W8-5"/>
</dbReference>
<dbReference type="RefSeq" id="NP_001035049.1">
    <molecule id="Q2Y0W8-1"/>
    <property type="nucleotide sequence ID" value="NM_001039960.3"/>
</dbReference>
<dbReference type="RefSeq" id="NP_001245330.1">
    <molecule id="Q2Y0W8-5"/>
    <property type="nucleotide sequence ID" value="NM_001258401.3"/>
</dbReference>
<dbReference type="RefSeq" id="NP_001245331.1">
    <molecule id="Q2Y0W8-6"/>
    <property type="nucleotide sequence ID" value="NM_001258402.2"/>
</dbReference>
<dbReference type="RefSeq" id="NP_001245332.1">
    <molecule id="Q2Y0W8-7"/>
    <property type="nucleotide sequence ID" value="NM_001258403.2"/>
</dbReference>
<dbReference type="RefSeq" id="NP_001254544.1">
    <molecule id="Q2Y0W8-8"/>
    <property type="nucleotide sequence ID" value="NM_001267615.2"/>
</dbReference>
<dbReference type="RefSeq" id="NP_001392195.1">
    <molecule id="Q2Y0W8-7"/>
    <property type="nucleotide sequence ID" value="NM_001405266.1"/>
</dbReference>
<dbReference type="RefSeq" id="XP_016875730.1">
    <property type="nucleotide sequence ID" value="XM_017020241.1"/>
</dbReference>
<dbReference type="RefSeq" id="XP_047285867.1">
    <molecule id="Q2Y0W8-3"/>
    <property type="nucleotide sequence ID" value="XM_047429911.1"/>
</dbReference>
<dbReference type="PDB" id="5JHO">
    <property type="method" value="X-ray"/>
    <property type="resolution" value="2.80 A"/>
    <property type="chains" value="A/B=54-397"/>
</dbReference>
<dbReference type="PDBsum" id="5JHO"/>
<dbReference type="SMR" id="Q2Y0W8"/>
<dbReference type="BioGRID" id="114877">
    <property type="interactions" value="35"/>
</dbReference>
<dbReference type="FunCoup" id="Q2Y0W8">
    <property type="interactions" value="721"/>
</dbReference>
<dbReference type="IntAct" id="Q2Y0W8">
    <property type="interactions" value="34"/>
</dbReference>
<dbReference type="STRING" id="9606.ENSP00000405812"/>
<dbReference type="DrugBank" id="DB01390">
    <property type="generic name" value="Sodium bicarbonate"/>
</dbReference>
<dbReference type="TCDB" id="2.A.31.2.4">
    <property type="family name" value="the anion exchanger (ae) family"/>
</dbReference>
<dbReference type="GlyGen" id="Q2Y0W8">
    <property type="glycosylation" value="4 sites, 1 O-linked glycan (3 sites)"/>
</dbReference>
<dbReference type="iPTMnet" id="Q2Y0W8"/>
<dbReference type="PhosphoSitePlus" id="Q2Y0W8"/>
<dbReference type="SwissPalm" id="Q2Y0W8"/>
<dbReference type="BioMuta" id="SLC4A8"/>
<dbReference type="DMDM" id="121942008"/>
<dbReference type="jPOST" id="Q2Y0W8"/>
<dbReference type="MassIVE" id="Q2Y0W8"/>
<dbReference type="PaxDb" id="9606-ENSP00000405812"/>
<dbReference type="PeptideAtlas" id="Q2Y0W8"/>
<dbReference type="ProteomicsDB" id="16963"/>
<dbReference type="ProteomicsDB" id="24921"/>
<dbReference type="ProteomicsDB" id="61540">
    <molecule id="Q2Y0W8-1"/>
</dbReference>
<dbReference type="ProteomicsDB" id="61541">
    <molecule id="Q2Y0W8-2"/>
</dbReference>
<dbReference type="ProteomicsDB" id="61542">
    <molecule id="Q2Y0W8-3"/>
</dbReference>
<dbReference type="ProteomicsDB" id="61543">
    <molecule id="Q2Y0W8-4"/>
</dbReference>
<dbReference type="ProteomicsDB" id="61544">
    <molecule id="Q2Y0W8-5"/>
</dbReference>
<dbReference type="ProteomicsDB" id="61545">
    <molecule id="Q2Y0W8-6"/>
</dbReference>
<dbReference type="ProteomicsDB" id="61546">
    <molecule id="Q2Y0W8-7"/>
</dbReference>
<dbReference type="Antibodypedia" id="26410">
    <property type="antibodies" value="172 antibodies from 26 providers"/>
</dbReference>
<dbReference type="DNASU" id="9498"/>
<dbReference type="Ensembl" id="ENST00000358657.7">
    <molecule id="Q2Y0W8-5"/>
    <property type="protein sequence ID" value="ENSP00000351483.4"/>
    <property type="gene ID" value="ENSG00000050438.17"/>
</dbReference>
<dbReference type="Ensembl" id="ENST00000453097.7">
    <molecule id="Q2Y0W8-1"/>
    <property type="protein sequence ID" value="ENSP00000405812.2"/>
    <property type="gene ID" value="ENSG00000050438.17"/>
</dbReference>
<dbReference type="Ensembl" id="ENST00000514353.7">
    <molecule id="Q2Y0W8-7"/>
    <property type="protein sequence ID" value="ENSP00000442561.2"/>
    <property type="gene ID" value="ENSG00000050438.17"/>
</dbReference>
<dbReference type="Ensembl" id="ENST00000535225.6">
    <molecule id="Q2Y0W8-8"/>
    <property type="protein sequence ID" value="ENSP00000441520.1"/>
    <property type="gene ID" value="ENSG00000050438.17"/>
</dbReference>
<dbReference type="GeneID" id="9498"/>
<dbReference type="KEGG" id="hsa:9498"/>
<dbReference type="MANE-Select" id="ENST00000453097.7">
    <property type="protein sequence ID" value="ENSP00000405812.2"/>
    <property type="RefSeq nucleotide sequence ID" value="NM_001039960.3"/>
    <property type="RefSeq protein sequence ID" value="NP_001035049.1"/>
</dbReference>
<dbReference type="UCSC" id="uc001rys.3">
    <molecule id="Q2Y0W8-1"/>
    <property type="organism name" value="human"/>
</dbReference>
<dbReference type="AGR" id="HGNC:11034"/>
<dbReference type="CTD" id="9498"/>
<dbReference type="DisGeNET" id="9498"/>
<dbReference type="GeneCards" id="SLC4A8"/>
<dbReference type="HGNC" id="HGNC:11034">
    <property type="gene designation" value="SLC4A8"/>
</dbReference>
<dbReference type="HPA" id="ENSG00000050438">
    <property type="expression patterns" value="Group enriched (brain, pituitary gland, retina, testis)"/>
</dbReference>
<dbReference type="MIM" id="605024">
    <property type="type" value="gene"/>
</dbReference>
<dbReference type="neXtProt" id="NX_Q2Y0W8"/>
<dbReference type="OpenTargets" id="ENSG00000050438"/>
<dbReference type="PharmGKB" id="PA35900"/>
<dbReference type="VEuPathDB" id="HostDB:ENSG00000050438"/>
<dbReference type="eggNOG" id="KOG1172">
    <property type="taxonomic scope" value="Eukaryota"/>
</dbReference>
<dbReference type="GeneTree" id="ENSGT00940000157422"/>
<dbReference type="HOGENOM" id="CLU_002289_5_3_1"/>
<dbReference type="InParanoid" id="Q2Y0W8"/>
<dbReference type="OMA" id="SIEEISX"/>
<dbReference type="OrthoDB" id="1735926at2759"/>
<dbReference type="PAN-GO" id="Q2Y0W8">
    <property type="GO annotations" value="5 GO annotations based on evolutionary models"/>
</dbReference>
<dbReference type="PhylomeDB" id="Q2Y0W8"/>
<dbReference type="TreeFam" id="TF313630"/>
<dbReference type="PathwayCommons" id="Q2Y0W8"/>
<dbReference type="Reactome" id="R-HSA-425381">
    <property type="pathway name" value="Bicarbonate transporters"/>
</dbReference>
<dbReference type="SignaLink" id="Q2Y0W8"/>
<dbReference type="SIGNOR" id="Q2Y0W8"/>
<dbReference type="BioGRID-ORCS" id="9498">
    <property type="hits" value="17 hits in 1150 CRISPR screens"/>
</dbReference>
<dbReference type="ChiTaRS" id="SLC4A8">
    <property type="organism name" value="human"/>
</dbReference>
<dbReference type="GeneWiki" id="SLC4A8"/>
<dbReference type="GenomeRNAi" id="9498"/>
<dbReference type="Pharos" id="Q2Y0W8">
    <property type="development level" value="Tbio"/>
</dbReference>
<dbReference type="PRO" id="PR:Q2Y0W8"/>
<dbReference type="Proteomes" id="UP000005640">
    <property type="component" value="Chromosome 12"/>
</dbReference>
<dbReference type="RNAct" id="Q2Y0W8">
    <property type="molecule type" value="protein"/>
</dbReference>
<dbReference type="Bgee" id="ENSG00000050438">
    <property type="expression patterns" value="Expressed in pons and 168 other cell types or tissues"/>
</dbReference>
<dbReference type="GO" id="GO:0016324">
    <property type="term" value="C:apical plasma membrane"/>
    <property type="evidence" value="ECO:0007669"/>
    <property type="project" value="UniProtKB-SubCell"/>
</dbReference>
<dbReference type="GO" id="GO:0032279">
    <property type="term" value="C:asymmetric synapse"/>
    <property type="evidence" value="ECO:0000250"/>
    <property type="project" value="ARUK-UCL"/>
</dbReference>
<dbReference type="GO" id="GO:0043679">
    <property type="term" value="C:axon terminus"/>
    <property type="evidence" value="ECO:0000250"/>
    <property type="project" value="ARUK-UCL"/>
</dbReference>
<dbReference type="GO" id="GO:0016323">
    <property type="term" value="C:basolateral plasma membrane"/>
    <property type="evidence" value="ECO:0007669"/>
    <property type="project" value="UniProtKB-SubCell"/>
</dbReference>
<dbReference type="GO" id="GO:0030425">
    <property type="term" value="C:dendrite"/>
    <property type="evidence" value="ECO:0000314"/>
    <property type="project" value="ARUK-UCL"/>
</dbReference>
<dbReference type="GO" id="GO:0097386">
    <property type="term" value="C:glial cell projection"/>
    <property type="evidence" value="ECO:0000250"/>
    <property type="project" value="ARUK-UCL"/>
</dbReference>
<dbReference type="GO" id="GO:0098978">
    <property type="term" value="C:glutamatergic synapse"/>
    <property type="evidence" value="ECO:0000250"/>
    <property type="project" value="ARUK-UCL"/>
</dbReference>
<dbReference type="GO" id="GO:0097457">
    <property type="term" value="C:hippocampal mossy fiber"/>
    <property type="evidence" value="ECO:0000250"/>
    <property type="project" value="ARUK-UCL"/>
</dbReference>
<dbReference type="GO" id="GO:0016020">
    <property type="term" value="C:membrane"/>
    <property type="evidence" value="ECO:0000250"/>
    <property type="project" value="ARUK-UCL"/>
</dbReference>
<dbReference type="GO" id="GO:0043005">
    <property type="term" value="C:neuron projection"/>
    <property type="evidence" value="ECO:0000250"/>
    <property type="project" value="ARUK-UCL"/>
</dbReference>
<dbReference type="GO" id="GO:0032809">
    <property type="term" value="C:neuronal cell body membrane"/>
    <property type="evidence" value="ECO:0000250"/>
    <property type="project" value="ARUK-UCL"/>
</dbReference>
<dbReference type="GO" id="GO:0005886">
    <property type="term" value="C:plasma membrane"/>
    <property type="evidence" value="ECO:0000314"/>
    <property type="project" value="UniProtKB"/>
</dbReference>
<dbReference type="GO" id="GO:0098793">
    <property type="term" value="C:presynapse"/>
    <property type="evidence" value="ECO:0000250"/>
    <property type="project" value="ARUK-UCL"/>
</dbReference>
<dbReference type="GO" id="GO:0042734">
    <property type="term" value="C:presynaptic membrane"/>
    <property type="evidence" value="ECO:0000250"/>
    <property type="project" value="ARUK-UCL"/>
</dbReference>
<dbReference type="GO" id="GO:0032280">
    <property type="term" value="C:symmetric synapse"/>
    <property type="evidence" value="ECO:0000250"/>
    <property type="project" value="ARUK-UCL"/>
</dbReference>
<dbReference type="GO" id="GO:0008021">
    <property type="term" value="C:synaptic vesicle"/>
    <property type="evidence" value="ECO:0000250"/>
    <property type="project" value="ARUK-UCL"/>
</dbReference>
<dbReference type="GO" id="GO:0030672">
    <property type="term" value="C:synaptic vesicle membrane"/>
    <property type="evidence" value="ECO:0007669"/>
    <property type="project" value="UniProtKB-SubCell"/>
</dbReference>
<dbReference type="GO" id="GO:0043195">
    <property type="term" value="C:terminal bouton"/>
    <property type="evidence" value="ECO:0000250"/>
    <property type="project" value="ARUK-UCL"/>
</dbReference>
<dbReference type="GO" id="GO:0015106">
    <property type="term" value="F:bicarbonate transmembrane transporter activity"/>
    <property type="evidence" value="ECO:0000314"/>
    <property type="project" value="ARUK-UCL"/>
</dbReference>
<dbReference type="GO" id="GO:0015108">
    <property type="term" value="F:chloride transmembrane transporter activity"/>
    <property type="evidence" value="ECO:0000314"/>
    <property type="project" value="ARUK-UCL"/>
</dbReference>
<dbReference type="GO" id="GO:0042802">
    <property type="term" value="F:identical protein binding"/>
    <property type="evidence" value="ECO:0000314"/>
    <property type="project" value="UniProtKB"/>
</dbReference>
<dbReference type="GO" id="GO:0015081">
    <property type="term" value="F:sodium ion transmembrane transporter activity"/>
    <property type="evidence" value="ECO:0000314"/>
    <property type="project" value="ARUK-UCL"/>
</dbReference>
<dbReference type="GO" id="GO:0140892">
    <property type="term" value="F:sodium,bicarbonate:chloride antiporter activity"/>
    <property type="evidence" value="ECO:0000314"/>
    <property type="project" value="UniProtKB"/>
</dbReference>
<dbReference type="GO" id="GO:0008510">
    <property type="term" value="F:sodium:bicarbonate symporter activity"/>
    <property type="evidence" value="ECO:0000314"/>
    <property type="project" value="ARUK-UCL"/>
</dbReference>
<dbReference type="GO" id="GO:0005452">
    <property type="term" value="F:solute:inorganic anion antiporter activity"/>
    <property type="evidence" value="ECO:0000304"/>
    <property type="project" value="Reactome"/>
</dbReference>
<dbReference type="GO" id="GO:0008270">
    <property type="term" value="F:zinc ion binding"/>
    <property type="evidence" value="ECO:0000314"/>
    <property type="project" value="UniProtKB"/>
</dbReference>
<dbReference type="GO" id="GO:0110010">
    <property type="term" value="P:basolateral protein secretion"/>
    <property type="evidence" value="ECO:0007669"/>
    <property type="project" value="Ensembl"/>
</dbReference>
<dbReference type="GO" id="GO:0015701">
    <property type="term" value="P:bicarbonate transport"/>
    <property type="evidence" value="ECO:0000314"/>
    <property type="project" value="ARUK-UCL"/>
</dbReference>
<dbReference type="GO" id="GO:1902476">
    <property type="term" value="P:chloride transmembrane transport"/>
    <property type="evidence" value="ECO:0000314"/>
    <property type="project" value="ARUK-UCL"/>
</dbReference>
<dbReference type="GO" id="GO:0050804">
    <property type="term" value="P:modulation of chemical synaptic transmission"/>
    <property type="evidence" value="ECO:0000250"/>
    <property type="project" value="ARUK-UCL"/>
</dbReference>
<dbReference type="GO" id="GO:2000302">
    <property type="term" value="P:positive regulation of synaptic vesicle exocytosis"/>
    <property type="evidence" value="ECO:0000250"/>
    <property type="project" value="ARUK-UCL"/>
</dbReference>
<dbReference type="GO" id="GO:0051453">
    <property type="term" value="P:regulation of intracellular pH"/>
    <property type="evidence" value="ECO:0000314"/>
    <property type="project" value="ARUK-UCL"/>
</dbReference>
<dbReference type="GO" id="GO:0042391">
    <property type="term" value="P:regulation of membrane potential"/>
    <property type="evidence" value="ECO:0000314"/>
    <property type="project" value="ARUK-UCL"/>
</dbReference>
<dbReference type="GO" id="GO:0035725">
    <property type="term" value="P:sodium ion transmembrane transport"/>
    <property type="evidence" value="ECO:0000314"/>
    <property type="project" value="ARUK-UCL"/>
</dbReference>
<dbReference type="GO" id="GO:0055085">
    <property type="term" value="P:transmembrane transport"/>
    <property type="evidence" value="ECO:0000318"/>
    <property type="project" value="GO_Central"/>
</dbReference>
<dbReference type="GO" id="GO:0150104">
    <property type="term" value="P:transport across blood-brain barrier"/>
    <property type="evidence" value="ECO:0000303"/>
    <property type="project" value="ARUK-UCL"/>
</dbReference>
<dbReference type="FunFam" id="1.10.287.570:FF:000001">
    <property type="entry name" value="Anion exchange protein"/>
    <property type="match status" value="1"/>
</dbReference>
<dbReference type="FunFam" id="3.40.930.10:FF:000001">
    <property type="entry name" value="Anion exchange protein"/>
    <property type="match status" value="1"/>
</dbReference>
<dbReference type="Gene3D" id="1.10.287.570">
    <property type="entry name" value="Helical hairpin bin"/>
    <property type="match status" value="1"/>
</dbReference>
<dbReference type="Gene3D" id="3.40.930.10">
    <property type="entry name" value="Mannitol-specific EII, Chain A"/>
    <property type="match status" value="1"/>
</dbReference>
<dbReference type="InterPro" id="IPR013769">
    <property type="entry name" value="Band3_cytoplasmic_dom"/>
</dbReference>
<dbReference type="InterPro" id="IPR011531">
    <property type="entry name" value="HCO3_transpt-like_TM_dom"/>
</dbReference>
<dbReference type="InterPro" id="IPR003020">
    <property type="entry name" value="HCO3_transpt_euk"/>
</dbReference>
<dbReference type="InterPro" id="IPR003024">
    <property type="entry name" value="Na/HCO3_transpt"/>
</dbReference>
<dbReference type="InterPro" id="IPR016152">
    <property type="entry name" value="PTrfase/Anion_transptr"/>
</dbReference>
<dbReference type="NCBIfam" id="TIGR00834">
    <property type="entry name" value="ae"/>
    <property type="match status" value="1"/>
</dbReference>
<dbReference type="PANTHER" id="PTHR11453">
    <property type="entry name" value="ANION EXCHANGE PROTEIN"/>
    <property type="match status" value="1"/>
</dbReference>
<dbReference type="PANTHER" id="PTHR11453:SF37">
    <property type="entry name" value="ELECTRONEUTRAL SODIUM BICARBONATE EXCHANGER 1"/>
    <property type="match status" value="1"/>
</dbReference>
<dbReference type="Pfam" id="PF07565">
    <property type="entry name" value="Band_3_cyto"/>
    <property type="match status" value="1"/>
</dbReference>
<dbReference type="Pfam" id="PF00955">
    <property type="entry name" value="HCO3_cotransp"/>
    <property type="match status" value="1"/>
</dbReference>
<dbReference type="PRINTS" id="PR01231">
    <property type="entry name" value="HCO3TRNSPORT"/>
</dbReference>
<dbReference type="PRINTS" id="PR01232">
    <property type="entry name" value="NAHCO3TRSPRT"/>
</dbReference>
<dbReference type="SUPFAM" id="SSF55804">
    <property type="entry name" value="Phoshotransferase/anion transport protein"/>
    <property type="match status" value="1"/>
</dbReference>
<proteinExistence type="evidence at protein level"/>
<feature type="chain" id="PRO_0000328922" description="Electroneutral sodium bicarbonate exchanger 1">
    <location>
        <begin position="1"/>
        <end position="1093"/>
    </location>
</feature>
<feature type="topological domain" description="Extracellular" evidence="3">
    <location>
        <begin position="1"/>
        <end position="478"/>
    </location>
</feature>
<feature type="transmembrane region" description="Helical" evidence="3">
    <location>
        <begin position="479"/>
        <end position="499"/>
    </location>
</feature>
<feature type="topological domain" description="Cytoplasmic" evidence="3">
    <location>
        <begin position="500"/>
        <end position="523"/>
    </location>
</feature>
<feature type="transmembrane region" description="Helical" evidence="3">
    <location>
        <begin position="524"/>
        <end position="544"/>
    </location>
</feature>
<feature type="topological domain" description="Extracellular" evidence="3">
    <location>
        <begin position="545"/>
        <end position="565"/>
    </location>
</feature>
<feature type="transmembrane region" description="Helical" evidence="3">
    <location>
        <begin position="566"/>
        <end position="586"/>
    </location>
</feature>
<feature type="topological domain" description="Cytoplasmic" evidence="3">
    <location>
        <begin position="587"/>
        <end position="595"/>
    </location>
</feature>
<feature type="transmembrane region" description="Helical" evidence="3">
    <location>
        <begin position="596"/>
        <end position="616"/>
    </location>
</feature>
<feature type="topological domain" description="Extracellular" evidence="3">
    <location>
        <begin position="617"/>
        <end position="687"/>
    </location>
</feature>
<feature type="transmembrane region" description="Helical" evidence="3">
    <location>
        <begin position="688"/>
        <end position="708"/>
    </location>
</feature>
<feature type="topological domain" description="Cytoplasmic" evidence="3">
    <location>
        <begin position="709"/>
        <end position="731"/>
    </location>
</feature>
<feature type="transmembrane region" description="Helical" evidence="3">
    <location>
        <begin position="732"/>
        <end position="752"/>
    </location>
</feature>
<feature type="topological domain" description="Extracellular" evidence="3">
    <location>
        <begin position="753"/>
        <end position="778"/>
    </location>
</feature>
<feature type="transmembrane region" description="Helical" evidence="3">
    <location>
        <begin position="779"/>
        <end position="799"/>
    </location>
</feature>
<feature type="topological domain" description="Cytoplasmic" evidence="3">
    <location>
        <begin position="800"/>
        <end position="824"/>
    </location>
</feature>
<feature type="transmembrane region" description="Helical" evidence="3">
    <location>
        <begin position="825"/>
        <end position="845"/>
    </location>
</feature>
<feature type="topological domain" description="Extracellular" evidence="3">
    <location>
        <begin position="846"/>
        <end position="881"/>
    </location>
</feature>
<feature type="transmembrane region" description="Helical" evidence="3">
    <location>
        <begin position="882"/>
        <end position="902"/>
    </location>
</feature>
<feature type="topological domain" description="Cytoplasmic" evidence="3">
    <location>
        <begin position="903"/>
        <end position="904"/>
    </location>
</feature>
<feature type="transmembrane region" description="Helical" evidence="3">
    <location>
        <begin position="905"/>
        <end position="925"/>
    </location>
</feature>
<feature type="topological domain" description="Extracellular" evidence="3">
    <location>
        <begin position="926"/>
        <end position="962"/>
    </location>
</feature>
<feature type="transmembrane region" description="Helical" evidence="3">
    <location>
        <begin position="963"/>
        <end position="983"/>
    </location>
</feature>
<feature type="topological domain" description="Cytoplasmic" evidence="3">
    <location>
        <begin position="984"/>
        <end position="1093"/>
    </location>
</feature>
<feature type="region of interest" description="Disordered" evidence="4">
    <location>
        <begin position="1"/>
        <end position="25"/>
    </location>
</feature>
<feature type="region of interest" description="Disordered" evidence="4">
    <location>
        <begin position="55"/>
        <end position="95"/>
    </location>
</feature>
<feature type="coiled-coil region" evidence="3">
    <location>
        <begin position="1010"/>
        <end position="1036"/>
    </location>
</feature>
<feature type="compositionally biased region" description="Basic residues" evidence="4">
    <location>
        <begin position="59"/>
        <end position="77"/>
    </location>
</feature>
<feature type="glycosylation site" description="N-linked (GlcNAc) asparagine" evidence="1">
    <location>
        <position position="646"/>
    </location>
</feature>
<feature type="disulfide bond" evidence="1">
    <location>
        <begin position="636"/>
        <end position="684"/>
    </location>
</feature>
<feature type="disulfide bond" evidence="1">
    <location>
        <begin position="638"/>
        <end position="672"/>
    </location>
</feature>
<feature type="splice variant" id="VSP_052759" description="In isoform 4, isoform 5, isoform 7 and isoform 8." evidence="14 16 17">
    <location>
        <begin position="1"/>
        <end position="53"/>
    </location>
</feature>
<feature type="splice variant" id="VSP_052760" description="In isoform 2." evidence="18">
    <original>MPAAGSNEPDGVLSYQ</original>
    <variation>MFNKNNSNKLRSTPRYRRGDPGYLNFTELGPLKPEQKDQWSQH</variation>
    <location>
        <begin position="1"/>
        <end position="16"/>
    </location>
</feature>
<feature type="splice variant" id="VSP_052761" description="In isoform 6 and isoform 8." evidence="14 15">
    <original>ECQEMHGEFMGSACGHHGPYT</original>
    <variation>VSLGAARCPSIVTTGLGGTSK</variation>
    <location>
        <begin position="671"/>
        <end position="691"/>
    </location>
</feature>
<feature type="splice variant" id="VSP_052762" description="In isoform 6 and isoform 8." evidence="14 15">
    <location>
        <begin position="692"/>
        <end position="1093"/>
    </location>
</feature>
<feature type="splice variant" id="VSP_052763" description="In isoform 7." evidence="16">
    <original>VRSMVSDFAVFLTIFTMVIIDFLIGVPSPKLQVPSVFKPTRDDRGWIINPIGPNPWWTVIAAIIPALLCTILIFMD</original>
    <variation>MESCSVAWLECGGVILAHCNLRLLPSSWDYRHAPPQPANFCIFSRDGVSPCWPGWSQSLDLVICLPRPPKMLGLQA</variation>
    <location>
        <begin position="725"/>
        <end position="800"/>
    </location>
</feature>
<feature type="splice variant" id="VSP_052764" description="In isoform 7." evidence="16">
    <location>
        <begin position="801"/>
        <end position="1093"/>
    </location>
</feature>
<feature type="splice variant" id="VSP_052765" description="In isoform 2, isoform 3 and isoform 4." evidence="13 17 18">
    <original>EAEKMLEIGGDKFPLESRKLLSSPGKNISCRCDPSEINISDEMPKTTVWKALSMNSGNAKEKSLFN</original>
    <variation>VIVLAPTVYLGASNYRT</variation>
    <location>
        <begin position="1028"/>
        <end position="1093"/>
    </location>
</feature>
<feature type="sequence variant" id="VAR_048351" description="In dbSNP:rs35966334.">
    <original>D</original>
    <variation>A</variation>
    <location>
        <position position="312"/>
    </location>
</feature>
<feature type="sequence variant" id="VAR_048352" description="In dbSNP:rs12318785.">
    <original>I</original>
    <variation>V</variation>
    <location>
        <position position="898"/>
    </location>
</feature>
<feature type="sequence conflict" description="In Ref. 4; BAG58292." evidence="19" ref="4">
    <original>F</original>
    <variation>L</variation>
    <location>
        <position position="482"/>
    </location>
</feature>
<feature type="sequence conflict" description="In Ref. 1; AAC82380." evidence="19" ref="1">
    <original>M</original>
    <variation>T</variation>
    <location>
        <position position="1008"/>
    </location>
</feature>
<feature type="helix" evidence="28">
    <location>
        <begin position="98"/>
        <end position="104"/>
    </location>
</feature>
<feature type="strand" evidence="28">
    <location>
        <begin position="116"/>
        <end position="125"/>
    </location>
</feature>
<feature type="strand" evidence="28">
    <location>
        <begin position="133"/>
        <end position="147"/>
    </location>
</feature>
<feature type="helix" evidence="28">
    <location>
        <begin position="148"/>
        <end position="150"/>
    </location>
</feature>
<feature type="helix" evidence="28">
    <location>
        <begin position="163"/>
        <end position="175"/>
    </location>
</feature>
<feature type="strand" evidence="28">
    <location>
        <begin position="176"/>
        <end position="182"/>
    </location>
</feature>
<feature type="helix" evidence="28">
    <location>
        <begin position="187"/>
        <end position="195"/>
    </location>
</feature>
<feature type="turn" evidence="28">
    <location>
        <begin position="198"/>
        <end position="201"/>
    </location>
</feature>
<feature type="strand" evidence="28">
    <location>
        <begin position="202"/>
        <end position="204"/>
    </location>
</feature>
<feature type="helix" evidence="28">
    <location>
        <begin position="206"/>
        <end position="216"/>
    </location>
</feature>
<feature type="helix" evidence="28">
    <location>
        <begin position="291"/>
        <end position="293"/>
    </location>
</feature>
<feature type="strand" evidence="28">
    <location>
        <begin position="299"/>
        <end position="308"/>
    </location>
</feature>
<feature type="strand" evidence="28">
    <location>
        <begin position="315"/>
        <end position="325"/>
    </location>
</feature>
<feature type="turn" evidence="28">
    <location>
        <begin position="328"/>
        <end position="330"/>
    </location>
</feature>
<feature type="strand" evidence="28">
    <location>
        <begin position="331"/>
        <end position="333"/>
    </location>
</feature>
<feature type="strand" evidence="28">
    <location>
        <begin position="337"/>
        <end position="345"/>
    </location>
</feature>
<feature type="helix" evidence="28">
    <location>
        <begin position="350"/>
        <end position="363"/>
    </location>
</feature>
<feature type="helix" evidence="28">
    <location>
        <begin position="367"/>
        <end position="375"/>
    </location>
</feature>
<feature type="helix" evidence="28">
    <location>
        <begin position="379"/>
        <end position="392"/>
    </location>
</feature>
<feature type="strand" evidence="28">
    <location>
        <begin position="394"/>
        <end position="396"/>
    </location>
</feature>
<feature type="short sequence motif" description="VTVLP; mediates dimerization" evidence="10">
    <location sequence="Q2Y0W8-4">
        <begin position="340"/>
        <end position="344"/>
    </location>
</feature>
<feature type="binding site" evidence="20">
    <location sequence="Q2Y0W8-4">
        <position position="167"/>
    </location>
    <ligand>
        <name>Zn(2+)</name>
        <dbReference type="ChEBI" id="CHEBI:29105"/>
    </ligand>
</feature>
<feature type="binding site" evidence="20">
    <location sequence="Q2Y0W8-4">
        <position position="169"/>
    </location>
    <ligand>
        <name>Zn(2+)</name>
        <dbReference type="ChEBI" id="CHEBI:29105"/>
    </ligand>
</feature>
<feature type="mutagenesis site" description="Significant reduction in zinc binding." evidence="10">
    <original>W</original>
    <variation>F</variation>
    <location sequence="Q2Y0W8-4">
        <position position="80"/>
    </location>
</feature>
<feature type="mutagenesis site" description="Significant reduction in zinc binding." evidence="10">
    <original>H</original>
    <variation>A</variation>
    <location sequence="Q2Y0W8-4">
        <position position="167"/>
    </location>
</feature>
<feature type="mutagenesis site" description="Significant reduction in zinc binding." evidence="10">
    <original>H</original>
    <variation>A</variation>
    <location sequence="Q2Y0W8-4">
        <position position="169"/>
    </location>
</feature>
<feature type="sequence conflict" description="In Ref. 5; CAD38576." evidence="19" ref="5">
    <original>Q</original>
    <variation>R</variation>
    <location sequence="Q2Y0W8-7">
        <position position="707"/>
    </location>
</feature>
<feature type="sequence conflict" description="In Ref. 5; CAD38576." evidence="19" ref="5">
    <original>R</original>
    <variation>G</variation>
    <location sequence="Q2Y0W8-7">
        <position position="716"/>
    </location>
</feature>
<sequence>MPAAGSNEPDGVLSYQRPDEEAVVDQGGTSTILNIHYEKEELEGHRTLYVGVRMPLGRQSHRHHRTHGQKHRRRGRGKGASQGEEGLEALAHDTPSQRVQFILGTEEDEEHVPHELFTELDEICMKEGEDAEWKETARWLKFEEDVEDGGERWSKPYVATLSLHSLFELRSCLINGTVLLDMHANSIEEISDLILDQQELSSDLNDSMRVKVREALLKKHHHQNEKKRNNLIPIVRSFAEVGKKQSDPHLMDKHGQTVSPQSVPTTNLEVKNGVNCEHSPVDLSKVDLHFMKKIPTGAEASNVLVGEVDILDRPIVAFVRLSPAVLLSGLTEVPIPTRFLFILLGPVGKGQQYHEIGRSMATIMTDEIFHDVAYKAKERDDLLAGIDEFLDQVTVLPPGEWDPSIRIEPPKNVPSQEKRKMPGVPNGNVCHIEQEPHGGHSGPELQRTGRLFGGLVLDIKRKAPWYWSDYRDALSLQCLASFLFLYCACMSPVITFGGLLGEATEGRISAIESLFGASMTGIAYSLFAGQALTILGSTGPVLVFEKILFKFCKDYALSYLSLRACIGLWTAFLCIVLVATDASSLVCYITRFTEEAFASLICIIFIYEAIEKLIHLAETYPIHMHSQLDHLSLYYCRCTLPENPNNHTLQYWKDHNIVTAEVHWANLTVSECQEMHGEFMGSACGHHGPYTPDVLFWSCILFFTTFILSSTLKTFKTSRYFPTRVRSMVSDFAVFLTIFTMVIIDFLIGVPSPKLQVPSVFKPTRDDRGWIINPIGPNPWWTVIAAIIPALLCTILIFMDQQITAVIINRKEHKLKKGCGYHLDLLMVAIMLGVCSIMGLPWFVAATVLSITHVNSLKLESECSAPGEQPKFLGIREQRVTGLMIFVLMGCSVFMTAILKFIPMPVLYGVFLYMGVSSLQGIQFFDRLKLFGMPAKHQPDFIYLRHVPLRKVHLFTLIQLTCLVLLWVIKASPAAIVFPMMVLALVFVRKVMDLCFSKRELSWLDDLMPESKKKKLDDAKKKAKEEEEAEKMLEIGGDKFPLESRKLLSSPGKNISCRCDPSEINISDEMPKTTVWKALSMNSGNAKEKSLFN</sequence>
<gene>
    <name evidence="24 27" type="primary">SLC4A8</name>
    <name type="synonym">KIAA0739</name>
    <name evidence="21" type="synonym">NBC</name>
    <name evidence="12" type="synonym">NBC3</name>
    <name evidence="13" type="synonym">NDCBE1</name>
</gene>
<name>S4A8_HUMAN</name>
<protein>
    <recommendedName>
        <fullName>Electroneutral sodium bicarbonate exchanger 1</fullName>
    </recommendedName>
    <alternativeName>
        <fullName>Electroneutral Na(+)-driven Cl-HCO3 exchanger</fullName>
    </alternativeName>
    <alternativeName>
        <fullName>Solute carrier family 4 member 8</fullName>
    </alternativeName>
    <alternativeName>
        <fullName>k-NBC3</fullName>
    </alternativeName>
</protein>